<keyword id="KW-0027">Amidation</keyword>
<keyword id="KW-0044">Antibiotic</keyword>
<keyword id="KW-0929">Antimicrobial</keyword>
<keyword id="KW-0903">Direct protein sequencing</keyword>
<keyword id="KW-0295">Fungicide</keyword>
<keyword id="KW-1213">G-protein coupled receptor impairing toxin</keyword>
<keyword id="KW-0391">Immunity</keyword>
<keyword id="KW-0399">Innate immunity</keyword>
<keyword id="KW-0467">Mast cell degranulation</keyword>
<keyword id="KW-0472">Membrane</keyword>
<keyword id="KW-0677">Repeat</keyword>
<keyword id="KW-0964">Secreted</keyword>
<keyword id="KW-0732">Signal</keyword>
<keyword id="KW-1052">Target cell membrane</keyword>
<keyword id="KW-1053">Target membrane</keyword>
<keyword id="KW-0800">Toxin</keyword>
<feature type="signal peptide" evidence="3">
    <location>
        <begin position="1"/>
        <end position="27"/>
    </location>
</feature>
<feature type="propeptide" id="PRO_0000458819" evidence="11">
    <location>
        <begin position="28"/>
        <end position="45"/>
    </location>
</feature>
<feature type="peptide" id="PRO_0000044058" description="Mastoparan-B" evidence="4">
    <location>
        <begin position="46"/>
        <end position="59"/>
    </location>
</feature>
<feature type="repeat" description="AXPX 1" evidence="10">
    <location>
        <begin position="27"/>
        <end position="30"/>
    </location>
</feature>
<feature type="repeat" description="AXPX 2" evidence="10">
    <location>
        <begin position="31"/>
        <end position="34"/>
    </location>
</feature>
<feature type="repeat" description="AXPX 3" evidence="10">
    <location>
        <begin position="35"/>
        <end position="38"/>
    </location>
</feature>
<feature type="repeat" description="AXPX 4" evidence="10">
    <location>
        <begin position="41"/>
        <end position="44"/>
    </location>
</feature>
<feature type="modified residue" description="Leucine amide" evidence="4">
    <location>
        <position position="59"/>
    </location>
</feature>
<feature type="sequence conflict" description="In Ref. 1; AAZ57338." evidence="10" ref="1">
    <original>N</original>
    <variation>S</variation>
    <location>
        <position position="3"/>
    </location>
</feature>
<reference evidence="14" key="1">
    <citation type="journal article" date="2007" name="Insect Mol. Biol.">
        <title>Molecular cloning of the precursor polypeptide of mastoparan B and its putative processing enzyme, dipeptidyl peptidase IV, from the black-bellied hornet, Vespa basalis.</title>
        <authorList>
            <person name="Lee V.S."/>
            <person name="Tu W.C."/>
            <person name="Jinn T.R."/>
            <person name="Peng C.C."/>
            <person name="Lin L.J."/>
            <person name="Tzen J.T."/>
        </authorList>
    </citation>
    <scope>NUCLEOTIDE SEQUENCE [MRNA]</scope>
    <source>
        <tissue>Venom gland</tissue>
    </source>
</reference>
<reference key="2">
    <citation type="journal article" date="2011" name="Peptides">
        <title>Structural and biological characterization of mastoparans in the venom of Vespa species in Taiwan.</title>
        <authorList>
            <person name="Lin C.H."/>
            <person name="Tzen J.T."/>
            <person name="Shyu C.L."/>
            <person name="Yang M.J."/>
            <person name="Tu W.C."/>
        </authorList>
    </citation>
    <scope>NUCLEOTIDE SEQUENCE [MRNA]</scope>
    <scope>FUNCTION</scope>
    <scope>PROBABLE AMIDATION AT LEU-59</scope>
    <scope>SYNTHESIS OF 46-59</scope>
    <source>
        <tissue>Venom gland</tissue>
    </source>
</reference>
<reference key="3">
    <citation type="journal article" date="1991" name="Biochem. J.">
        <title>Structure and biological activities of a new mastoparan isolated from the venom of the hornet Vespa basalis.</title>
        <authorList>
            <person name="Ho C.-L."/>
            <person name="Hwang L.-L."/>
        </authorList>
    </citation>
    <scope>PROTEIN SEQUENCE OF 46-59</scope>
    <scope>FUNCTION</scope>
    <scope>AMIDATION AT LEU-59</scope>
    <scope>SUBCELLULAR LOCATION</scope>
    <source>
        <tissue>Venom</tissue>
    </source>
</reference>
<reference key="4">
    <citation type="journal article" date="2016" name="Molecules">
        <title>MP-V1 from the venom of social wasp vespula vulgaris is a de novo type of mastoparan that displays superior antimicrobial activities.</title>
        <authorList>
            <person name="Kim Y."/>
            <person name="Son M."/>
            <person name="Noh E.Y."/>
            <person name="Kim S."/>
            <person name="Kim C."/>
            <person name="Yeo J.H."/>
            <person name="Park C."/>
            <person name="Lee K.W."/>
            <person name="Bang W.Y."/>
        </authorList>
    </citation>
    <scope>FUNCTION</scope>
    <scope>SYNTHESIS</scope>
    <scope>SUBCELLULAR LOCATION</scope>
</reference>
<protein>
    <recommendedName>
        <fullName evidence="7 8 9">Mastoparan-B</fullName>
        <shortName evidence="9">MP-B</shortName>
    </recommendedName>
</protein>
<dbReference type="EMBL" id="DQ119291">
    <property type="protein sequence ID" value="AAZ57338.1"/>
    <property type="molecule type" value="mRNA"/>
</dbReference>
<dbReference type="PIR" id="S14336">
    <property type="entry name" value="S14336"/>
</dbReference>
<dbReference type="TCDB" id="1.C.32.1.7">
    <property type="family name" value="the amphipathic peptide mastoparan (mastoparan) family"/>
</dbReference>
<dbReference type="GO" id="GO:0005576">
    <property type="term" value="C:extracellular region"/>
    <property type="evidence" value="ECO:0007669"/>
    <property type="project" value="UniProtKB-SubCell"/>
</dbReference>
<dbReference type="GO" id="GO:0016020">
    <property type="term" value="C:membrane"/>
    <property type="evidence" value="ECO:0007669"/>
    <property type="project" value="UniProtKB-KW"/>
</dbReference>
<dbReference type="GO" id="GO:0044218">
    <property type="term" value="C:other organism cell membrane"/>
    <property type="evidence" value="ECO:0007669"/>
    <property type="project" value="UniProtKB-KW"/>
</dbReference>
<dbReference type="GO" id="GO:0090729">
    <property type="term" value="F:toxin activity"/>
    <property type="evidence" value="ECO:0007669"/>
    <property type="project" value="UniProtKB-KW"/>
</dbReference>
<dbReference type="GO" id="GO:0042742">
    <property type="term" value="P:defense response to bacterium"/>
    <property type="evidence" value="ECO:0007669"/>
    <property type="project" value="UniProtKB-KW"/>
</dbReference>
<dbReference type="GO" id="GO:0050832">
    <property type="term" value="P:defense response to fungus"/>
    <property type="evidence" value="ECO:0007669"/>
    <property type="project" value="UniProtKB-KW"/>
</dbReference>
<dbReference type="GO" id="GO:0045087">
    <property type="term" value="P:innate immune response"/>
    <property type="evidence" value="ECO:0007669"/>
    <property type="project" value="UniProtKB-KW"/>
</dbReference>
<dbReference type="GO" id="GO:0031640">
    <property type="term" value="P:killing of cells of another organism"/>
    <property type="evidence" value="ECO:0007669"/>
    <property type="project" value="UniProtKB-KW"/>
</dbReference>
<name>MAST_VESBA</name>
<sequence>MKNTILILFTAFIALLGFFGMSAEALADPLAEPLADPNAEADPEALKLKSIVSWAKKVLG</sequence>
<comment type="function">
    <text evidence="1 2 4 5 6">Antimicrobial and mast cell degranulating peptide. Has broad spectrum antibacterial activity against both Gram-positive (S.aureus MIC=96-128 ug/ml, S.xylosus MIC=2 ug/ml, S.alactolyticus MIC=32 ug/ml, and S.choleraesuis MIC=32 ug/ml) and Gram-negative bacteria (C.koseri MIC=6 ug/ml, E.coli MIC=3-16 ug/ml, K.pneumoniae MIC=128 ug/ml, P.aerugiosa MIC=128 ug/ml, S.typhimurium MIC=64 ug/ml, V.parahamelytics MIC=32 ug/ml, and S.enterica), as well as on fungi (C.albicans, C.glabrata, and C.neoformans) (PubMed:21884742, PubMed:27104500). Does not show antimicrobial activity against S.mutans (PubMed:27104500). Affects membrane permeability of E.coli (PubMed:21884742). Also acts as a mast cell degranulating peptide, that causes liberation of histamine from rat peritoneal mast cells (PubMed:2006909). Its mast cell degranulation activity may be related to the activation of G-protein coupled receptors in mast cells as well as interaction with other proteins located in cell endosomal membranes in the mast cells (By similarity). Whether this peptide shows hemolytic activities is controversial, as Lin et al., 2011 and Ho et al., 1991 found a hemolytic activity on sheep, chicken and human erythrocytes, whereas Kim et al., 2016 found no hemolytic activity on human erythrocytes (PubMed:2006909, PubMed:21884742, PubMed:27104500). In vivo, induces edema in the rat paw (PubMed:2006909).</text>
</comment>
<comment type="subcellular location">
    <subcellularLocation>
        <location evidence="4 12">Secreted</location>
    </subcellularLocation>
    <subcellularLocation>
        <location evidence="10">Target cell membrane</location>
    </subcellularLocation>
    <text evidence="12 13">Assumes an amphipathic alpha-helical conformation in a membrane-like environment.</text>
</comment>
<comment type="tissue specificity">
    <text evidence="11 12">Expressed by the venom gland.</text>
</comment>
<comment type="similarity">
    <text evidence="10">Belongs to the MCD family. Mastoparan subfamily.</text>
</comment>
<accession>P21654</accession>
<accession>Q0R4F6</accession>
<organism>
    <name type="scientific">Vespa basalis</name>
    <name type="common">Hornet</name>
    <dbReference type="NCBI Taxonomy" id="7444"/>
    <lineage>
        <taxon>Eukaryota</taxon>
        <taxon>Metazoa</taxon>
        <taxon>Ecdysozoa</taxon>
        <taxon>Arthropoda</taxon>
        <taxon>Hexapoda</taxon>
        <taxon>Insecta</taxon>
        <taxon>Pterygota</taxon>
        <taxon>Neoptera</taxon>
        <taxon>Endopterygota</taxon>
        <taxon>Hymenoptera</taxon>
        <taxon>Apocrita</taxon>
        <taxon>Aculeata</taxon>
        <taxon>Vespoidea</taxon>
        <taxon>Vespidae</taxon>
        <taxon>Vespinae</taxon>
        <taxon>Vespa</taxon>
    </lineage>
</organism>
<proteinExistence type="evidence at protein level"/>
<evidence type="ECO:0000250" key="1">
    <source>
        <dbReference type="UniProtKB" id="P01514"/>
    </source>
</evidence>
<evidence type="ECO:0000250" key="2">
    <source>
        <dbReference type="UniProtKB" id="P84914"/>
    </source>
</evidence>
<evidence type="ECO:0000255" key="3"/>
<evidence type="ECO:0000269" key="4">
    <source>
    </source>
</evidence>
<evidence type="ECO:0000269" key="5">
    <source>
    </source>
</evidence>
<evidence type="ECO:0000269" key="6">
    <source>
    </source>
</evidence>
<evidence type="ECO:0000303" key="7">
    <source>
    </source>
</evidence>
<evidence type="ECO:0000303" key="8">
    <source>
    </source>
</evidence>
<evidence type="ECO:0000303" key="9">
    <source>
    </source>
</evidence>
<evidence type="ECO:0000305" key="10"/>
<evidence type="ECO:0000305" key="11">
    <source>
    </source>
</evidence>
<evidence type="ECO:0000305" key="12">
    <source>
    </source>
</evidence>
<evidence type="ECO:0000305" key="13">
    <source>
    </source>
</evidence>
<evidence type="ECO:0000312" key="14">
    <source>
        <dbReference type="EMBL" id="AAZ57338.1"/>
    </source>
</evidence>